<evidence type="ECO:0000255" key="1">
    <source>
        <dbReference type="HAMAP-Rule" id="MF_01390"/>
    </source>
</evidence>
<organism>
    <name type="scientific">Anthocercis angustifolia</name>
    <name type="common">Narrow-leaf ray-flower</name>
    <dbReference type="NCBI Taxonomy" id="195717"/>
    <lineage>
        <taxon>Eukaryota</taxon>
        <taxon>Viridiplantae</taxon>
        <taxon>Streptophyta</taxon>
        <taxon>Embryophyta</taxon>
        <taxon>Tracheophyta</taxon>
        <taxon>Spermatophyta</taxon>
        <taxon>Magnoliopsida</taxon>
        <taxon>eudicotyledons</taxon>
        <taxon>Gunneridae</taxon>
        <taxon>Pentapetalae</taxon>
        <taxon>asterids</taxon>
        <taxon>lamiids</taxon>
        <taxon>Solanales</taxon>
        <taxon>Solanaceae</taxon>
        <taxon>Nicotianoideae</taxon>
        <taxon>Anthocercideae</taxon>
        <taxon>Anthocercis</taxon>
    </lineage>
</organism>
<protein>
    <recommendedName>
        <fullName evidence="1">Maturase K</fullName>
    </recommendedName>
    <alternativeName>
        <fullName evidence="1">Intron maturase</fullName>
    </alternativeName>
</protein>
<name>MATK_ANTAN</name>
<comment type="function">
    <text evidence="1">Usually encoded in the trnK tRNA gene intron. Probably assists in splicing its own and other chloroplast group II introns.</text>
</comment>
<comment type="subcellular location">
    <subcellularLocation>
        <location>Plastid</location>
        <location>Chloroplast</location>
    </subcellularLocation>
</comment>
<comment type="similarity">
    <text evidence="1">Belongs to the intron maturase 2 family. MatK subfamily.</text>
</comment>
<dbReference type="EMBL" id="AJ585857">
    <property type="protein sequence ID" value="CAE51498.1"/>
    <property type="molecule type" value="Genomic_DNA"/>
</dbReference>
<dbReference type="GO" id="GO:0009507">
    <property type="term" value="C:chloroplast"/>
    <property type="evidence" value="ECO:0007669"/>
    <property type="project" value="UniProtKB-SubCell"/>
</dbReference>
<dbReference type="GO" id="GO:0003723">
    <property type="term" value="F:RNA binding"/>
    <property type="evidence" value="ECO:0007669"/>
    <property type="project" value="UniProtKB-KW"/>
</dbReference>
<dbReference type="GO" id="GO:0006397">
    <property type="term" value="P:mRNA processing"/>
    <property type="evidence" value="ECO:0007669"/>
    <property type="project" value="UniProtKB-KW"/>
</dbReference>
<dbReference type="GO" id="GO:0008380">
    <property type="term" value="P:RNA splicing"/>
    <property type="evidence" value="ECO:0007669"/>
    <property type="project" value="UniProtKB-UniRule"/>
</dbReference>
<dbReference type="GO" id="GO:0008033">
    <property type="term" value="P:tRNA processing"/>
    <property type="evidence" value="ECO:0007669"/>
    <property type="project" value="UniProtKB-KW"/>
</dbReference>
<dbReference type="HAMAP" id="MF_01390">
    <property type="entry name" value="MatK"/>
    <property type="match status" value="1"/>
</dbReference>
<dbReference type="InterPro" id="IPR024937">
    <property type="entry name" value="Domain_X"/>
</dbReference>
<dbReference type="InterPro" id="IPR002866">
    <property type="entry name" value="Maturase_MatK"/>
</dbReference>
<dbReference type="InterPro" id="IPR024942">
    <property type="entry name" value="Maturase_MatK_N"/>
</dbReference>
<dbReference type="PANTHER" id="PTHR34811">
    <property type="entry name" value="MATURASE K"/>
    <property type="match status" value="1"/>
</dbReference>
<dbReference type="PANTHER" id="PTHR34811:SF1">
    <property type="entry name" value="MATURASE K"/>
    <property type="match status" value="1"/>
</dbReference>
<dbReference type="Pfam" id="PF01348">
    <property type="entry name" value="Intron_maturas2"/>
    <property type="match status" value="1"/>
</dbReference>
<dbReference type="Pfam" id="PF01824">
    <property type="entry name" value="MatK_N"/>
    <property type="match status" value="1"/>
</dbReference>
<keyword id="KW-0150">Chloroplast</keyword>
<keyword id="KW-0507">mRNA processing</keyword>
<keyword id="KW-0934">Plastid</keyword>
<keyword id="KW-0694">RNA-binding</keyword>
<keyword id="KW-0819">tRNA processing</keyword>
<feature type="chain" id="PRO_0000143239" description="Maturase K">
    <location>
        <begin position="1"/>
        <end position="509"/>
    </location>
</feature>
<reference key="1">
    <citation type="journal article" date="2004" name="Mol. Phylogenet. Evol.">
        <title>Phylogenetic relationships in Nicotiana (Solanaceae) inferred from multiple plastid regions.</title>
        <authorList>
            <person name="Clarkson J.J."/>
            <person name="Knapp S."/>
            <person name="Garcia V.F."/>
            <person name="Olmstead R.G."/>
            <person name="Leitch A.R."/>
            <person name="Chase M.W."/>
        </authorList>
    </citation>
    <scope>NUCLEOTIDE SEQUENCE [GENOMIC DNA]</scope>
</reference>
<proteinExistence type="inferred from homology"/>
<gene>
    <name evidence="1" type="primary">matK</name>
</gene>
<accession>Q70D30</accession>
<sequence>MEEIQRYLQPDRSQQHNFLYPLIFQEYIYALAHDHGLNRNRSILLENPGYDNKFSFLIVKRLITRMYQQNHFLISTNDSNKNSFLGCNKSLYSQMISEGFAFIAEIPFSLRLMSSLSSFEGKNIFKSHNLRSIHSTFPFLEDNFSHLNYVLDILIPYPVHLEILVQTLRYWVKDASSLHLLRFFLHEYWNLNSLITSKKPGYSFSKKNQRFFFFLYNSYVYECESTFVFLRNQSSHLRSTSFGALLERIYFYGKIERLVEVFAKDFQVTLWLFKDPFMHYVRYQGKSIMASKGTFLLMNKWKFYLVNFWQCHFSLCFHTGRIHINQLSNHSRDFMGYLSSVRLNPSMVRSQMLENSFLINNAIKKFDILVPIIPLIGSLAKENFCTVLGHPISKPVWSDLSDSDIIDRFGRICRNLFHYYSGSSKKKTLYRIKYILRLSCARTLARKHKSTVRTFLKRSGSELLEEFLTSEEQVLSLTFPRASSSLWGVYRSRIWYLDIFCINDLANYQ</sequence>
<geneLocation type="chloroplast"/>